<feature type="signal peptide" evidence="2 7">
    <location>
        <begin position="1"/>
        <end position="22"/>
    </location>
</feature>
<feature type="propeptide" id="PRO_0000391429" evidence="1 7">
    <location>
        <begin position="23"/>
        <end position="47"/>
    </location>
</feature>
<feature type="peptide" id="PRO_5000391785" description="Dybowskin-2CDYa" evidence="4">
    <location>
        <begin position="48"/>
        <end position="65"/>
    </location>
</feature>
<feature type="region of interest" description="Disordered" evidence="3">
    <location>
        <begin position="26"/>
        <end position="65"/>
    </location>
</feature>
<feature type="compositionally biased region" description="Acidic residues" evidence="3">
    <location>
        <begin position="26"/>
        <end position="43"/>
    </location>
</feature>
<feature type="compositionally biased region" description="Basic residues" evidence="3">
    <location>
        <begin position="50"/>
        <end position="65"/>
    </location>
</feature>
<comment type="function">
    <text evidence="4">Antimicrobial peptide. Has activity against the Gram-positive bacterium S.aureus (MIC=6 uM) and the Gram-negative bacterium E.coli (MIC=3 uM). Lacks hemolytic activity against human erythrocytes.</text>
</comment>
<comment type="subcellular location">
    <subcellularLocation>
        <location evidence="1">Secreted</location>
    </subcellularLocation>
</comment>
<comment type="tissue specificity">
    <text evidence="4">Expressed by the skin glands.</text>
</comment>
<comment type="similarity">
    <text evidence="2">Belongs to the frog skin active peptide (FSAP) family. Brevinin subfamily.</text>
</comment>
<accession>B5A9T1</accession>
<reference evidence="6 7" key="1">
    <citation type="journal article" date="2009" name="Comp. Biochem. Physiol.">
        <title>Characterization of antimicrobial peptides isolated from the skin of the Chinese frog, Rana dybowskii.</title>
        <authorList>
            <person name="Jin L.-L."/>
            <person name="Li Q."/>
            <person name="Song S.-S."/>
            <person name="Feng K."/>
            <person name="Zhang D.-B."/>
            <person name="Wang Q.-Y."/>
            <person name="Chen Y.-H."/>
        </authorList>
    </citation>
    <scope>NUCLEOTIDE SEQUENCE [MRNA]</scope>
    <scope>FUNCTION</scope>
    <scope>TISSUE SPECIFICITY</scope>
    <source>
        <tissue evidence="7">Skin</tissue>
    </source>
</reference>
<sequence>MFTLKKSLLLLFFIGVIKLSLCEEERNADDDERRDDPDEMDVEVENRSAVGRHGRRFGLRKHRKH</sequence>
<proteinExistence type="evidence at transcript level"/>
<protein>
    <recommendedName>
        <fullName evidence="5 7">Dybowskin-2CDYa</fullName>
    </recommendedName>
</protein>
<name>D2CYA_RANDY</name>
<keyword id="KW-0878">Amphibian defense peptide</keyword>
<keyword id="KW-0044">Antibiotic</keyword>
<keyword id="KW-0929">Antimicrobial</keyword>
<keyword id="KW-0964">Secreted</keyword>
<keyword id="KW-0732">Signal</keyword>
<evidence type="ECO:0000250" key="1">
    <source>
        <dbReference type="UniProtKB" id="B5A9S9"/>
    </source>
</evidence>
<evidence type="ECO:0000255" key="2"/>
<evidence type="ECO:0000256" key="3">
    <source>
        <dbReference type="SAM" id="MobiDB-lite"/>
    </source>
</evidence>
<evidence type="ECO:0000269" key="4">
    <source>
    </source>
</evidence>
<evidence type="ECO:0000303" key="5">
    <source>
    </source>
</evidence>
<evidence type="ECO:0000305" key="6"/>
<evidence type="ECO:0000312" key="7">
    <source>
        <dbReference type="EMBL" id="ACF08009.1"/>
    </source>
</evidence>
<organism>
    <name type="scientific">Rana dybowskii</name>
    <name type="common">Dybovsky's frog</name>
    <name type="synonym">Korean brown frog</name>
    <dbReference type="NCBI Taxonomy" id="71582"/>
    <lineage>
        <taxon>Eukaryota</taxon>
        <taxon>Metazoa</taxon>
        <taxon>Chordata</taxon>
        <taxon>Craniata</taxon>
        <taxon>Vertebrata</taxon>
        <taxon>Euteleostomi</taxon>
        <taxon>Amphibia</taxon>
        <taxon>Batrachia</taxon>
        <taxon>Anura</taxon>
        <taxon>Neobatrachia</taxon>
        <taxon>Ranoidea</taxon>
        <taxon>Ranidae</taxon>
        <taxon>Rana</taxon>
        <taxon>Rana</taxon>
    </lineage>
</organism>
<dbReference type="EMBL" id="EU827809">
    <property type="protein sequence ID" value="ACF08009.1"/>
    <property type="molecule type" value="mRNA"/>
</dbReference>
<dbReference type="GO" id="GO:0005576">
    <property type="term" value="C:extracellular region"/>
    <property type="evidence" value="ECO:0000314"/>
    <property type="project" value="UniProtKB"/>
</dbReference>
<dbReference type="GO" id="GO:0050829">
    <property type="term" value="P:defense response to Gram-negative bacterium"/>
    <property type="evidence" value="ECO:0000314"/>
    <property type="project" value="UniProtKB"/>
</dbReference>
<dbReference type="GO" id="GO:0050830">
    <property type="term" value="P:defense response to Gram-positive bacterium"/>
    <property type="evidence" value="ECO:0000314"/>
    <property type="project" value="UniProtKB"/>
</dbReference>
<dbReference type="InterPro" id="IPR004275">
    <property type="entry name" value="Frog_antimicrobial_propeptide"/>
</dbReference>
<dbReference type="Pfam" id="PF03032">
    <property type="entry name" value="FSAP_sig_propep"/>
    <property type="match status" value="1"/>
</dbReference>